<organism>
    <name type="scientific">Yersinia pestis bv. Antiqua (strain Angola)</name>
    <dbReference type="NCBI Taxonomy" id="349746"/>
    <lineage>
        <taxon>Bacteria</taxon>
        <taxon>Pseudomonadati</taxon>
        <taxon>Pseudomonadota</taxon>
        <taxon>Gammaproteobacteria</taxon>
        <taxon>Enterobacterales</taxon>
        <taxon>Yersiniaceae</taxon>
        <taxon>Yersinia</taxon>
    </lineage>
</organism>
<keyword id="KW-0143">Chaperone</keyword>
<keyword id="KW-0963">Cytoplasm</keyword>
<gene>
    <name evidence="1" type="primary">viaA</name>
    <name type="ordered locus">YpAngola_A0004</name>
</gene>
<sequence length="488" mass="56081">MLSLATLDMLLSISEGELIEEMVVGLLAAPQLAIFFEKFPRIKRALMKDIPGWKQNLQQRIREASVPPGLANEFSLYQQSLLEDSPQFYAHLPDIVAQLQDLHSPFATQAKTLVQTADLAKNPPGGDSLQTLFLQRWRVSLILQTITIHHQLLEQEREQLLAELQRRLALSGALEPILTTNDNAAGRLWDMSQGHLQRGDYQLLLQYGDFLQQQPELIRLAEQLGRSRSAKAQPAPDARYEPYTVMVRQPDSVPEEVSGIHQSNDILRLLPTELVMLGMSELEFEFYRRLLERRLLTYRLQGDNWQEKTQQRPVSLKQNDEQPRGPFIVCVDTSGSMGGFNEQCAKAFCLALLRIALADNRRCYIMLFATEIIHYELSADNGIEQAIRFLNQHFRGGTDLAACLANTLNKMEDREWYDADAVIISDFIAQRLPEELVRKIKIQQQAHQHRFHAVAMSAYGKPGIMRIFDHIWRFDTSLKSRLIRRWKR</sequence>
<evidence type="ECO:0000255" key="1">
    <source>
        <dbReference type="HAMAP-Rule" id="MF_01626"/>
    </source>
</evidence>
<proteinExistence type="inferred from homology"/>
<feature type="chain" id="PRO_1000186165" description="Regulatory protein ViaA">
    <location>
        <begin position="1"/>
        <end position="488"/>
    </location>
</feature>
<accession>A9QYG4</accession>
<name>VIAA_YERPG</name>
<reference key="1">
    <citation type="journal article" date="2010" name="J. Bacteriol.">
        <title>Genome sequence of the deep-rooted Yersinia pestis strain Angola reveals new insights into the evolution and pangenome of the plague bacterium.</title>
        <authorList>
            <person name="Eppinger M."/>
            <person name="Worsham P.L."/>
            <person name="Nikolich M.P."/>
            <person name="Riley D.R."/>
            <person name="Sebastian Y."/>
            <person name="Mou S."/>
            <person name="Achtman M."/>
            <person name="Lindler L.E."/>
            <person name="Ravel J."/>
        </authorList>
    </citation>
    <scope>NUCLEOTIDE SEQUENCE [LARGE SCALE GENOMIC DNA]</scope>
    <source>
        <strain>Angola</strain>
    </source>
</reference>
<dbReference type="EMBL" id="CP000901">
    <property type="protein sequence ID" value="ABX86273.1"/>
    <property type="molecule type" value="Genomic_DNA"/>
</dbReference>
<dbReference type="RefSeq" id="WP_002212255.1">
    <property type="nucleotide sequence ID" value="NZ_CP009935.1"/>
</dbReference>
<dbReference type="SMR" id="A9QYG4"/>
<dbReference type="GeneID" id="57974590"/>
<dbReference type="KEGG" id="ypg:YpAngola_A0004"/>
<dbReference type="PATRIC" id="fig|349746.12.peg.952"/>
<dbReference type="GO" id="GO:0005829">
    <property type="term" value="C:cytosol"/>
    <property type="evidence" value="ECO:0007669"/>
    <property type="project" value="TreeGrafter"/>
</dbReference>
<dbReference type="CDD" id="cd01462">
    <property type="entry name" value="VWA_YIEM_type"/>
    <property type="match status" value="1"/>
</dbReference>
<dbReference type="Gene3D" id="3.40.50.410">
    <property type="entry name" value="von Willebrand factor, type A domain"/>
    <property type="match status" value="1"/>
</dbReference>
<dbReference type="HAMAP" id="MF_01626">
    <property type="entry name" value="ViaA"/>
    <property type="match status" value="1"/>
</dbReference>
<dbReference type="InterPro" id="IPR008912">
    <property type="entry name" value="Uncharacterised_CoxE"/>
</dbReference>
<dbReference type="InterPro" id="IPR023481">
    <property type="entry name" value="Uncharacterised_ViaA"/>
</dbReference>
<dbReference type="InterPro" id="IPR002035">
    <property type="entry name" value="VWF_A"/>
</dbReference>
<dbReference type="InterPro" id="IPR036465">
    <property type="entry name" value="vWFA_dom_sf"/>
</dbReference>
<dbReference type="NCBIfam" id="NF008230">
    <property type="entry name" value="PRK10997.1"/>
    <property type="match status" value="1"/>
</dbReference>
<dbReference type="PANTHER" id="PTHR36846">
    <property type="entry name" value="PROTEIN VIAA"/>
    <property type="match status" value="1"/>
</dbReference>
<dbReference type="PANTHER" id="PTHR36846:SF1">
    <property type="entry name" value="PROTEIN VIAA"/>
    <property type="match status" value="1"/>
</dbReference>
<dbReference type="Pfam" id="PF05762">
    <property type="entry name" value="VWA_CoxE"/>
    <property type="match status" value="1"/>
</dbReference>
<dbReference type="SMART" id="SM00327">
    <property type="entry name" value="VWA"/>
    <property type="match status" value="1"/>
</dbReference>
<dbReference type="SUPFAM" id="SSF53300">
    <property type="entry name" value="vWA-like"/>
    <property type="match status" value="1"/>
</dbReference>
<protein>
    <recommendedName>
        <fullName evidence="1">Regulatory protein ViaA</fullName>
    </recommendedName>
    <alternativeName>
        <fullName evidence="1">VWA interacting with AAA+ ATPase</fullName>
    </alternativeName>
</protein>
<comment type="function">
    <text evidence="1">Component of the RavA-ViaA chaperone complex, which may act on the membrane to optimize the function of some of the respiratory chains. ViaA stimulates the ATPase activity of RavA.</text>
</comment>
<comment type="subunit">
    <text evidence="1">Homodimer. Interacts with RavA.</text>
</comment>
<comment type="subcellular location">
    <subcellularLocation>
        <location evidence="1">Cytoplasm</location>
    </subcellularLocation>
</comment>
<comment type="similarity">
    <text evidence="1">Belongs to the ViaA family.</text>
</comment>